<comment type="function">
    <text evidence="1">Regulator of deubiquitinating complexes, which acts as a strong activator of USP1, USP12 and USP46. Enhances the USP1-mediated deubiquitination of FANCD2; USP1 being almost inactive by itself. Activates deubiquitination by increasing the catalytic turnover without increasing the affinity of deubiquitinating enzymes for the substrate. Also activates deubiquitinating activity of complexes containing USP12. Docks at the distal end of the USP12 fingers domain and induces a cascade of structural changes leading to the activation of the enzyme. Together with RAD51AP1, promotes DNA repair by stimulating RAD51-mediated homologous recombination. Binds single-stranded DNA (ssDNA) and double-stranded DNA (dsDNA). DNA-binding is required both for USP1-mediated deubiquitination of FANCD2 and stimulation of RAD51-mediated homologous recombination: both WDR48/UAF1 and RAD51AP1 have coordinated role in DNA-binding during these processes. Together with ATAD5 and by regulating USP1 activity, has a role in PCNA-mediated translesion synthesis (TLS) by deubiquitinating monoubiquitinated PCNA. Together with ATAD5, has a role in recruiting RAD51 to stalled forks during replication stress.</text>
</comment>
<comment type="subcellular location">
    <subcellularLocation>
        <location evidence="1">Nucleus</location>
    </subcellularLocation>
    <subcellularLocation>
        <location evidence="1">Cytoplasm</location>
    </subcellularLocation>
    <subcellularLocation>
        <location evidence="1">Lysosome</location>
    </subcellularLocation>
    <subcellularLocation>
        <location evidence="1">Late endosome</location>
    </subcellularLocation>
    <text evidence="1">Mainly in cytoplasmic compartments.</text>
</comment>
<comment type="domain">
    <text evidence="1">The WD repeats are required for the interaction with deubiquitinating enzymes USP1, USP12 and USP46.</text>
</comment>
<comment type="similarity">
    <text evidence="3">Belongs to the WD repeat WDR48 family.</text>
</comment>
<organism>
    <name type="scientific">Gallus gallus</name>
    <name type="common">Chicken</name>
    <dbReference type="NCBI Taxonomy" id="9031"/>
    <lineage>
        <taxon>Eukaryota</taxon>
        <taxon>Metazoa</taxon>
        <taxon>Chordata</taxon>
        <taxon>Craniata</taxon>
        <taxon>Vertebrata</taxon>
        <taxon>Euteleostomi</taxon>
        <taxon>Archelosauria</taxon>
        <taxon>Archosauria</taxon>
        <taxon>Dinosauria</taxon>
        <taxon>Saurischia</taxon>
        <taxon>Theropoda</taxon>
        <taxon>Coelurosauria</taxon>
        <taxon>Aves</taxon>
        <taxon>Neognathae</taxon>
        <taxon>Galloanserae</taxon>
        <taxon>Galliformes</taxon>
        <taxon>Phasianidae</taxon>
        <taxon>Phasianinae</taxon>
        <taxon>Gallus</taxon>
    </lineage>
</organism>
<keyword id="KW-0963">Cytoplasm</keyword>
<keyword id="KW-0227">DNA damage</keyword>
<keyword id="KW-0234">DNA repair</keyword>
<keyword id="KW-0238">DNA-binding</keyword>
<keyword id="KW-0967">Endosome</keyword>
<keyword id="KW-0458">Lysosome</keyword>
<keyword id="KW-0539">Nucleus</keyword>
<keyword id="KW-1185">Reference proteome</keyword>
<keyword id="KW-0677">Repeat</keyword>
<keyword id="KW-0833">Ubl conjugation pathway</keyword>
<keyword id="KW-0853">WD repeat</keyword>
<proteinExistence type="evidence at transcript level"/>
<sequence length="678" mass="76314">MAAHHRQNTAGRRKVQVSYVIRDEVEKYNRNGVNALQLDPALNRLFTAGRDSIIRIWSVNQHKQDPYIASMEHHTDWVNDIVLCCNGKTLISASSDTTVKVWNAHKGFCMSTLRTHKDYVKALAYAKDKELVASAGLDRQIFLWDVNTLTALTASNNTVTTSSLSGNKDSIYSLAMNQMGTVIVSGSTEKVLRVWDPRTCAKLMKLKGHTDNVKALLLNRDGTQCLSGSSDGTIRLWSLGQQRCIATYRVHDEGVWALQVNEAFTHVYSGGRDRKIYCTDLRNPDIRVLICEEKAPVLKMELDRSADPPPAIWVATTKSSVNKWTLKGIHNFRASGDYDNDCTNPIPPLCTQPDQVIKGGASIIQCHILNDKRHILTKDTNNNVAYWDVLKACKVEDLGKVDFEEEIKKRFKMVYVPNWFSVDLKTGMLTITLDESDCFAAWVSAKDAGFSSPDGSDPKLNLGGLLLQALLEYWPRTHINPMDEEENEINHAVNGEQENRVQKGNGYFQVPPHTPVIFGEAGGRTLFRLLCRDSGGETESMLLNETVPQWVIDITVDKNMPKFNKIPFYLQPHSSSGAKTLKKDRLSASDMLQVRKVMEHVYEKIINLDNESQTTSSSNNEKAGEQEKEEDIAVLAEEKIELLCQDQVLDPNMDLRTVKHFIWKSGGDLTLHYRQKST</sequence>
<evidence type="ECO:0000250" key="1">
    <source>
        <dbReference type="UniProtKB" id="Q8TAF3"/>
    </source>
</evidence>
<evidence type="ECO:0000256" key="2">
    <source>
        <dbReference type="SAM" id="MobiDB-lite"/>
    </source>
</evidence>
<evidence type="ECO:0000305" key="3"/>
<feature type="chain" id="PRO_0000051403" description="WD repeat-containing protein 48">
    <location>
        <begin position="1"/>
        <end position="678"/>
    </location>
</feature>
<feature type="repeat" description="WD 1">
    <location>
        <begin position="28"/>
        <end position="67"/>
    </location>
</feature>
<feature type="repeat" description="WD 2">
    <location>
        <begin position="73"/>
        <end position="112"/>
    </location>
</feature>
<feature type="repeat" description="WD 3">
    <location>
        <begin position="115"/>
        <end position="154"/>
    </location>
</feature>
<feature type="repeat" description="WD 4">
    <location>
        <begin position="166"/>
        <end position="205"/>
    </location>
</feature>
<feature type="repeat" description="WD 5">
    <location>
        <begin position="208"/>
        <end position="247"/>
    </location>
</feature>
<feature type="repeat" description="WD 6">
    <location>
        <begin position="250"/>
        <end position="289"/>
    </location>
</feature>
<feature type="repeat" description="WD 7">
    <location>
        <begin position="292"/>
        <end position="334"/>
    </location>
</feature>
<feature type="repeat" description="WD 8">
    <location>
        <begin position="358"/>
        <end position="452"/>
    </location>
</feature>
<feature type="region of interest" description="Disordered" evidence="2">
    <location>
        <begin position="608"/>
        <end position="629"/>
    </location>
</feature>
<feature type="compositionally biased region" description="Low complexity" evidence="2">
    <location>
        <begin position="610"/>
        <end position="621"/>
    </location>
</feature>
<dbReference type="EMBL" id="AJ851646">
    <property type="protein sequence ID" value="CAH65280.1"/>
    <property type="molecule type" value="mRNA"/>
</dbReference>
<dbReference type="RefSeq" id="NP_001026135.1">
    <property type="nucleotide sequence ID" value="NM_001030964.2"/>
</dbReference>
<dbReference type="SMR" id="Q5F3K4"/>
<dbReference type="FunCoup" id="Q5F3K4">
    <property type="interactions" value="3246"/>
</dbReference>
<dbReference type="STRING" id="9031.ENSGALP00000030646"/>
<dbReference type="PaxDb" id="9031-ENSGALP00000030646"/>
<dbReference type="Ensembl" id="ENSGALT00010064852.1">
    <property type="protein sequence ID" value="ENSGALP00010039641.1"/>
    <property type="gene ID" value="ENSGALG00010026715.1"/>
</dbReference>
<dbReference type="GeneID" id="420427"/>
<dbReference type="KEGG" id="gga:420427"/>
<dbReference type="CTD" id="57599"/>
<dbReference type="VEuPathDB" id="HostDB:geneid_420427"/>
<dbReference type="eggNOG" id="KOG0308">
    <property type="taxonomic scope" value="Eukaryota"/>
</dbReference>
<dbReference type="GeneTree" id="ENSGT00920000149157"/>
<dbReference type="HOGENOM" id="CLU_014960_0_1_1"/>
<dbReference type="InParanoid" id="Q5F3K4"/>
<dbReference type="OMA" id="IRHYHIL"/>
<dbReference type="OrthoDB" id="2421129at2759"/>
<dbReference type="PhylomeDB" id="Q5F3K4"/>
<dbReference type="TreeFam" id="TF315205"/>
<dbReference type="Reactome" id="R-GGA-110314">
    <property type="pathway name" value="Recognition of DNA damage by PCNA-containing replication complex"/>
</dbReference>
<dbReference type="Reactome" id="R-GGA-5689880">
    <property type="pathway name" value="Ub-specific processing proteases"/>
</dbReference>
<dbReference type="Reactome" id="R-GGA-6783310">
    <property type="pathway name" value="Fanconi Anemia Pathway"/>
</dbReference>
<dbReference type="PRO" id="PR:Q5F3K4"/>
<dbReference type="Proteomes" id="UP000000539">
    <property type="component" value="Chromosome 2"/>
</dbReference>
<dbReference type="Bgee" id="ENSGALG00000006052">
    <property type="expression patterns" value="Expressed in spermatid and 14 other cell types or tissues"/>
</dbReference>
<dbReference type="GO" id="GO:0005770">
    <property type="term" value="C:late endosome"/>
    <property type="evidence" value="ECO:0007669"/>
    <property type="project" value="UniProtKB-SubCell"/>
</dbReference>
<dbReference type="GO" id="GO:0005764">
    <property type="term" value="C:lysosome"/>
    <property type="evidence" value="ECO:0007669"/>
    <property type="project" value="UniProtKB-SubCell"/>
</dbReference>
<dbReference type="GO" id="GO:0005634">
    <property type="term" value="C:nucleus"/>
    <property type="evidence" value="ECO:0000250"/>
    <property type="project" value="UniProtKB"/>
</dbReference>
<dbReference type="GO" id="GO:0035800">
    <property type="term" value="F:deubiquitinase activator activity"/>
    <property type="evidence" value="ECO:0000250"/>
    <property type="project" value="UniProtKB"/>
</dbReference>
<dbReference type="GO" id="GO:0003677">
    <property type="term" value="F:DNA binding"/>
    <property type="evidence" value="ECO:0000250"/>
    <property type="project" value="UniProtKB"/>
</dbReference>
<dbReference type="GO" id="GO:0003690">
    <property type="term" value="F:double-stranded DNA binding"/>
    <property type="evidence" value="ECO:0000250"/>
    <property type="project" value="UniProtKB"/>
</dbReference>
<dbReference type="GO" id="GO:0003697">
    <property type="term" value="F:single-stranded DNA binding"/>
    <property type="evidence" value="ECO:0000250"/>
    <property type="project" value="UniProtKB"/>
</dbReference>
<dbReference type="GO" id="GO:0043130">
    <property type="term" value="F:ubiquitin binding"/>
    <property type="evidence" value="ECO:0000318"/>
    <property type="project" value="GO_Central"/>
</dbReference>
<dbReference type="GO" id="GO:0006974">
    <property type="term" value="P:DNA damage response"/>
    <property type="evidence" value="ECO:0000250"/>
    <property type="project" value="UniProtKB"/>
</dbReference>
<dbReference type="GO" id="GO:0000724">
    <property type="term" value="P:double-strand break repair via homologous recombination"/>
    <property type="evidence" value="ECO:0000318"/>
    <property type="project" value="GO_Central"/>
</dbReference>
<dbReference type="GO" id="GO:0048568">
    <property type="term" value="P:embryonic organ development"/>
    <property type="evidence" value="ECO:0007669"/>
    <property type="project" value="Ensembl"/>
</dbReference>
<dbReference type="GO" id="GO:0048872">
    <property type="term" value="P:homeostasis of number of cells"/>
    <property type="evidence" value="ECO:0007669"/>
    <property type="project" value="Ensembl"/>
</dbReference>
<dbReference type="GO" id="GO:0035264">
    <property type="term" value="P:multicellular organism growth"/>
    <property type="evidence" value="ECO:0007669"/>
    <property type="project" value="Ensembl"/>
</dbReference>
<dbReference type="GO" id="GO:1905168">
    <property type="term" value="P:positive regulation of double-strand break repair via homologous recombination"/>
    <property type="evidence" value="ECO:0000250"/>
    <property type="project" value="UniProtKB"/>
</dbReference>
<dbReference type="GO" id="GO:0050679">
    <property type="term" value="P:positive regulation of epithelial cell proliferation"/>
    <property type="evidence" value="ECO:0007669"/>
    <property type="project" value="Ensembl"/>
</dbReference>
<dbReference type="GO" id="GO:0046427">
    <property type="term" value="P:positive regulation of receptor signaling pathway via JAK-STAT"/>
    <property type="evidence" value="ECO:0007669"/>
    <property type="project" value="Ensembl"/>
</dbReference>
<dbReference type="GO" id="GO:1902525">
    <property type="term" value="P:regulation of protein monoubiquitination"/>
    <property type="evidence" value="ECO:0007669"/>
    <property type="project" value="Ensembl"/>
</dbReference>
<dbReference type="GO" id="GO:0072520">
    <property type="term" value="P:seminiferous tubule development"/>
    <property type="evidence" value="ECO:0007669"/>
    <property type="project" value="Ensembl"/>
</dbReference>
<dbReference type="GO" id="GO:0007338">
    <property type="term" value="P:single fertilization"/>
    <property type="evidence" value="ECO:0007669"/>
    <property type="project" value="Ensembl"/>
</dbReference>
<dbReference type="GO" id="GO:0048705">
    <property type="term" value="P:skeletal system morphogenesis"/>
    <property type="evidence" value="ECO:0007669"/>
    <property type="project" value="Ensembl"/>
</dbReference>
<dbReference type="GO" id="GO:0043588">
    <property type="term" value="P:skin development"/>
    <property type="evidence" value="ECO:0007669"/>
    <property type="project" value="Ensembl"/>
</dbReference>
<dbReference type="GO" id="GO:0007283">
    <property type="term" value="P:spermatogenesis"/>
    <property type="evidence" value="ECO:0007669"/>
    <property type="project" value="Ensembl"/>
</dbReference>
<dbReference type="CDD" id="cd17041">
    <property type="entry name" value="Ubl_WDR48"/>
    <property type="match status" value="1"/>
</dbReference>
<dbReference type="CDD" id="cd00200">
    <property type="entry name" value="WD40"/>
    <property type="match status" value="1"/>
</dbReference>
<dbReference type="FunFam" id="2.130.10.10:FF:000054">
    <property type="entry name" value="Putative WD repeat-containing protein 48"/>
    <property type="match status" value="1"/>
</dbReference>
<dbReference type="FunFam" id="2.130.10.10:FF:002031">
    <property type="entry name" value="WD repeat domain 48b"/>
    <property type="match status" value="1"/>
</dbReference>
<dbReference type="Gene3D" id="2.130.10.10">
    <property type="entry name" value="YVTN repeat-like/Quinoprotein amine dehydrogenase"/>
    <property type="match status" value="2"/>
</dbReference>
<dbReference type="InterPro" id="IPR020472">
    <property type="entry name" value="G-protein_beta_WD-40_rep"/>
</dbReference>
<dbReference type="InterPro" id="IPR015943">
    <property type="entry name" value="WD40/YVTN_repeat-like_dom_sf"/>
</dbReference>
<dbReference type="InterPro" id="IPR019775">
    <property type="entry name" value="WD40_repeat_CS"/>
</dbReference>
<dbReference type="InterPro" id="IPR036322">
    <property type="entry name" value="WD40_repeat_dom_sf"/>
</dbReference>
<dbReference type="InterPro" id="IPR001680">
    <property type="entry name" value="WD40_rpt"/>
</dbReference>
<dbReference type="InterPro" id="IPR051246">
    <property type="entry name" value="WDR48"/>
</dbReference>
<dbReference type="InterPro" id="IPR021772">
    <property type="entry name" value="WDR48/Bun107"/>
</dbReference>
<dbReference type="PANTHER" id="PTHR19862">
    <property type="entry name" value="WD REPEAT-CONTAINING PROTEIN 48"/>
    <property type="match status" value="1"/>
</dbReference>
<dbReference type="PANTHER" id="PTHR19862:SF14">
    <property type="entry name" value="WD REPEAT-CONTAINING PROTEIN 48"/>
    <property type="match status" value="1"/>
</dbReference>
<dbReference type="Pfam" id="PF11816">
    <property type="entry name" value="DUF3337"/>
    <property type="match status" value="1"/>
</dbReference>
<dbReference type="Pfam" id="PF00400">
    <property type="entry name" value="WD40"/>
    <property type="match status" value="6"/>
</dbReference>
<dbReference type="PRINTS" id="PR00320">
    <property type="entry name" value="GPROTEINBRPT"/>
</dbReference>
<dbReference type="SMART" id="SM00320">
    <property type="entry name" value="WD40"/>
    <property type="match status" value="7"/>
</dbReference>
<dbReference type="SUPFAM" id="SSF50978">
    <property type="entry name" value="WD40 repeat-like"/>
    <property type="match status" value="1"/>
</dbReference>
<dbReference type="PROSITE" id="PS00678">
    <property type="entry name" value="WD_REPEATS_1"/>
    <property type="match status" value="2"/>
</dbReference>
<dbReference type="PROSITE" id="PS50082">
    <property type="entry name" value="WD_REPEATS_2"/>
    <property type="match status" value="5"/>
</dbReference>
<dbReference type="PROSITE" id="PS50294">
    <property type="entry name" value="WD_REPEATS_REGION"/>
    <property type="match status" value="1"/>
</dbReference>
<reference key="1">
    <citation type="journal article" date="2005" name="Genome Biol.">
        <title>Full-length cDNAs from chicken bursal lymphocytes to facilitate gene function analysis.</title>
        <authorList>
            <person name="Caldwell R.B."/>
            <person name="Kierzek A.M."/>
            <person name="Arakawa H."/>
            <person name="Bezzubov Y."/>
            <person name="Zaim J."/>
            <person name="Fiedler P."/>
            <person name="Kutter S."/>
            <person name="Blagodatski A."/>
            <person name="Kostovska D."/>
            <person name="Koter M."/>
            <person name="Plachy J."/>
            <person name="Carninci P."/>
            <person name="Hayashizaki Y."/>
            <person name="Buerstedde J.-M."/>
        </authorList>
    </citation>
    <scope>NUCLEOTIDE SEQUENCE [LARGE SCALE MRNA]</scope>
    <source>
        <strain>CB</strain>
        <tissue>Bursa of Fabricius</tissue>
    </source>
</reference>
<protein>
    <recommendedName>
        <fullName>WD repeat-containing protein 48</fullName>
    </recommendedName>
    <alternativeName>
        <fullName>USP1-associated factor 1</fullName>
    </alternativeName>
</protein>
<name>WDR48_CHICK</name>
<accession>Q5F3K4</accession>
<gene>
    <name type="primary">WDR48</name>
    <name type="synonym">UAF1</name>
    <name type="ORF">RCJMB04_14o15</name>
</gene>